<dbReference type="EMBL" id="AP009367">
    <property type="protein sequence ID" value="BAF49895.1"/>
    <property type="molecule type" value="Genomic_DNA"/>
</dbReference>
<dbReference type="EMBL" id="AP009367">
    <property type="protein sequence ID" value="BAF49918.1"/>
    <property type="molecule type" value="Genomic_DNA"/>
</dbReference>
<dbReference type="SMR" id="A4QJP0"/>
<dbReference type="GO" id="GO:0009507">
    <property type="term" value="C:chloroplast"/>
    <property type="evidence" value="ECO:0007669"/>
    <property type="project" value="UniProtKB-SubCell"/>
</dbReference>
<dbReference type="GO" id="GO:0005762">
    <property type="term" value="C:mitochondrial large ribosomal subunit"/>
    <property type="evidence" value="ECO:0007669"/>
    <property type="project" value="TreeGrafter"/>
</dbReference>
<dbReference type="GO" id="GO:0019843">
    <property type="term" value="F:rRNA binding"/>
    <property type="evidence" value="ECO:0007669"/>
    <property type="project" value="UniProtKB-UniRule"/>
</dbReference>
<dbReference type="GO" id="GO:0003735">
    <property type="term" value="F:structural constituent of ribosome"/>
    <property type="evidence" value="ECO:0007669"/>
    <property type="project" value="InterPro"/>
</dbReference>
<dbReference type="GO" id="GO:0016740">
    <property type="term" value="F:transferase activity"/>
    <property type="evidence" value="ECO:0007669"/>
    <property type="project" value="InterPro"/>
</dbReference>
<dbReference type="GO" id="GO:0032543">
    <property type="term" value="P:mitochondrial translation"/>
    <property type="evidence" value="ECO:0007669"/>
    <property type="project" value="TreeGrafter"/>
</dbReference>
<dbReference type="FunFam" id="4.10.950.10:FF:000001">
    <property type="entry name" value="50S ribosomal protein L2"/>
    <property type="match status" value="1"/>
</dbReference>
<dbReference type="FunFam" id="2.30.30.30:FF:000008">
    <property type="entry name" value="50S ribosomal protein L2, chloroplastic"/>
    <property type="match status" value="1"/>
</dbReference>
<dbReference type="FunFam" id="2.40.50.140:FF:000029">
    <property type="entry name" value="50S ribosomal protein L2, chloroplastic"/>
    <property type="match status" value="1"/>
</dbReference>
<dbReference type="Gene3D" id="2.30.30.30">
    <property type="match status" value="1"/>
</dbReference>
<dbReference type="Gene3D" id="2.40.50.140">
    <property type="entry name" value="Nucleic acid-binding proteins"/>
    <property type="match status" value="1"/>
</dbReference>
<dbReference type="Gene3D" id="4.10.950.10">
    <property type="entry name" value="Ribosomal protein L2, domain 3"/>
    <property type="match status" value="1"/>
</dbReference>
<dbReference type="HAMAP" id="MF_01320_B">
    <property type="entry name" value="Ribosomal_uL2_B"/>
    <property type="match status" value="1"/>
</dbReference>
<dbReference type="InterPro" id="IPR012340">
    <property type="entry name" value="NA-bd_OB-fold"/>
</dbReference>
<dbReference type="InterPro" id="IPR014722">
    <property type="entry name" value="Rib_uL2_dom2"/>
</dbReference>
<dbReference type="InterPro" id="IPR002171">
    <property type="entry name" value="Ribosomal_uL2"/>
</dbReference>
<dbReference type="InterPro" id="IPR005880">
    <property type="entry name" value="Ribosomal_uL2_bac/org-type"/>
</dbReference>
<dbReference type="InterPro" id="IPR022669">
    <property type="entry name" value="Ribosomal_uL2_C"/>
</dbReference>
<dbReference type="InterPro" id="IPR022671">
    <property type="entry name" value="Ribosomal_uL2_CS"/>
</dbReference>
<dbReference type="InterPro" id="IPR014726">
    <property type="entry name" value="Ribosomal_uL2_dom3"/>
</dbReference>
<dbReference type="InterPro" id="IPR022666">
    <property type="entry name" value="Ribosomal_uL2_RNA-bd_dom"/>
</dbReference>
<dbReference type="InterPro" id="IPR008991">
    <property type="entry name" value="Translation_prot_SH3-like_sf"/>
</dbReference>
<dbReference type="NCBIfam" id="TIGR01171">
    <property type="entry name" value="rplB_bact"/>
    <property type="match status" value="1"/>
</dbReference>
<dbReference type="PANTHER" id="PTHR13691:SF5">
    <property type="entry name" value="LARGE RIBOSOMAL SUBUNIT PROTEIN UL2M"/>
    <property type="match status" value="1"/>
</dbReference>
<dbReference type="PANTHER" id="PTHR13691">
    <property type="entry name" value="RIBOSOMAL PROTEIN L2"/>
    <property type="match status" value="1"/>
</dbReference>
<dbReference type="Pfam" id="PF00181">
    <property type="entry name" value="Ribosomal_L2"/>
    <property type="match status" value="1"/>
</dbReference>
<dbReference type="Pfam" id="PF03947">
    <property type="entry name" value="Ribosomal_L2_C"/>
    <property type="match status" value="1"/>
</dbReference>
<dbReference type="PIRSF" id="PIRSF002158">
    <property type="entry name" value="Ribosomal_L2"/>
    <property type="match status" value="1"/>
</dbReference>
<dbReference type="SMART" id="SM01383">
    <property type="entry name" value="Ribosomal_L2"/>
    <property type="match status" value="1"/>
</dbReference>
<dbReference type="SMART" id="SM01382">
    <property type="entry name" value="Ribosomal_L2_C"/>
    <property type="match status" value="1"/>
</dbReference>
<dbReference type="SUPFAM" id="SSF50249">
    <property type="entry name" value="Nucleic acid-binding proteins"/>
    <property type="match status" value="1"/>
</dbReference>
<dbReference type="SUPFAM" id="SSF50104">
    <property type="entry name" value="Translation proteins SH3-like domain"/>
    <property type="match status" value="1"/>
</dbReference>
<dbReference type="PROSITE" id="PS00467">
    <property type="entry name" value="RIBOSOMAL_L2"/>
    <property type="match status" value="1"/>
</dbReference>
<sequence length="274" mass="29888">MAIHLYKTSTPSTRNGAVDSQVKSNPRNNLIYGQHRCGKGRNARGIITARHRGGGHKRLYRKIDFRRNAKDIYGRIVTIEYDPNRNAYICLIHYGDGEKRYILHPRGAIIGDTIVSGTEVPIKMGNALPLTDMPLGTAIHNIEITLGKGGQLARAAGAVAKLIAKEGKSATIKLPSGEVRLISKNCSATVGQVGNVGVNQKSLGRAGSKCWLGKRPVVRGVVMNPVDHPHGGGEGRAPIGRKKPATPWGYPALGRRTRKRKKYSETLILRRRSK</sequence>
<proteinExistence type="inferred from homology"/>
<name>RK2_AETGR</name>
<keyword id="KW-0150">Chloroplast</keyword>
<keyword id="KW-0934">Plastid</keyword>
<keyword id="KW-0687">Ribonucleoprotein</keyword>
<keyword id="KW-0689">Ribosomal protein</keyword>
<accession>A4QJP0</accession>
<reference key="1">
    <citation type="submission" date="2007-03" db="EMBL/GenBank/DDBJ databases">
        <title>Sequencing analysis of Aethionema grandiflorum chloroplast DNA.</title>
        <authorList>
            <person name="Hosouchi T."/>
            <person name="Tsuruoka H."/>
            <person name="Kotani H."/>
        </authorList>
    </citation>
    <scope>NUCLEOTIDE SEQUENCE [LARGE SCALE GENOMIC DNA]</scope>
</reference>
<organism>
    <name type="scientific">Aethionema grandiflorum</name>
    <name type="common">Persian stone-cress</name>
    <dbReference type="NCBI Taxonomy" id="72657"/>
    <lineage>
        <taxon>Eukaryota</taxon>
        <taxon>Viridiplantae</taxon>
        <taxon>Streptophyta</taxon>
        <taxon>Embryophyta</taxon>
        <taxon>Tracheophyta</taxon>
        <taxon>Spermatophyta</taxon>
        <taxon>Magnoliopsida</taxon>
        <taxon>eudicotyledons</taxon>
        <taxon>Gunneridae</taxon>
        <taxon>Pentapetalae</taxon>
        <taxon>rosids</taxon>
        <taxon>malvids</taxon>
        <taxon>Brassicales</taxon>
        <taxon>Brassicaceae</taxon>
        <taxon>Aethionemeae</taxon>
        <taxon>Aethionema</taxon>
    </lineage>
</organism>
<feature type="chain" id="PRO_0000310062" description="Large ribosomal subunit protein uL2cz/uL2cy">
    <location>
        <begin position="1"/>
        <end position="274"/>
    </location>
</feature>
<feature type="region of interest" description="Disordered" evidence="3">
    <location>
        <begin position="1"/>
        <end position="25"/>
    </location>
</feature>
<feature type="region of interest" description="Disordered" evidence="3">
    <location>
        <begin position="224"/>
        <end position="274"/>
    </location>
</feature>
<evidence type="ECO:0000250" key="1"/>
<evidence type="ECO:0000255" key="2">
    <source>
        <dbReference type="HAMAP-Rule" id="MF_01320"/>
    </source>
</evidence>
<evidence type="ECO:0000256" key="3">
    <source>
        <dbReference type="SAM" id="MobiDB-lite"/>
    </source>
</evidence>
<evidence type="ECO:0000305" key="4"/>
<comment type="subunit">
    <text evidence="1">Part of the 50S ribosomal subunit.</text>
</comment>
<comment type="subcellular location">
    <subcellularLocation>
        <location>Plastid</location>
        <location>Chloroplast</location>
    </subcellularLocation>
</comment>
<comment type="similarity">
    <text evidence="4">Belongs to the universal ribosomal protein uL2 family.</text>
</comment>
<geneLocation type="chloroplast"/>
<protein>
    <recommendedName>
        <fullName evidence="2">Large ribosomal subunit protein uL2cz/uL2cy</fullName>
    </recommendedName>
    <alternativeName>
        <fullName evidence="4">50S ribosomal protein L2, chloroplastic</fullName>
    </alternativeName>
</protein>
<gene>
    <name type="primary">rpl2-A</name>
</gene>
<gene>
    <name type="primary">rpl2-B</name>
</gene>